<accession>A3PJQ4</accession>
<name>ISPF_CERS1</name>
<protein>
    <recommendedName>
        <fullName evidence="1">2-C-methyl-D-erythritol 2,4-cyclodiphosphate synthase</fullName>
        <shortName evidence="1">MECDP-synthase</shortName>
        <shortName evidence="1">MECPP-synthase</shortName>
        <shortName evidence="1">MECPS</shortName>
        <ecNumber evidence="1">4.6.1.12</ecNumber>
    </recommendedName>
</protein>
<dbReference type="EC" id="4.6.1.12" evidence="1"/>
<dbReference type="EMBL" id="CP000577">
    <property type="protein sequence ID" value="ABN76570.1"/>
    <property type="molecule type" value="Genomic_DNA"/>
</dbReference>
<dbReference type="RefSeq" id="WP_009562175.1">
    <property type="nucleotide sequence ID" value="NC_009049.1"/>
</dbReference>
<dbReference type="SMR" id="A3PJQ4"/>
<dbReference type="GeneID" id="67446554"/>
<dbReference type="KEGG" id="rsh:Rsph17029_1460"/>
<dbReference type="HOGENOM" id="CLU_084630_2_0_5"/>
<dbReference type="UniPathway" id="UPA00056">
    <property type="reaction ID" value="UER00095"/>
</dbReference>
<dbReference type="GO" id="GO:0008685">
    <property type="term" value="F:2-C-methyl-D-erythritol 2,4-cyclodiphosphate synthase activity"/>
    <property type="evidence" value="ECO:0007669"/>
    <property type="project" value="UniProtKB-UniRule"/>
</dbReference>
<dbReference type="GO" id="GO:0046872">
    <property type="term" value="F:metal ion binding"/>
    <property type="evidence" value="ECO:0007669"/>
    <property type="project" value="UniProtKB-KW"/>
</dbReference>
<dbReference type="GO" id="GO:0019288">
    <property type="term" value="P:isopentenyl diphosphate biosynthetic process, methylerythritol 4-phosphate pathway"/>
    <property type="evidence" value="ECO:0007669"/>
    <property type="project" value="UniProtKB-UniRule"/>
</dbReference>
<dbReference type="GO" id="GO:0016114">
    <property type="term" value="P:terpenoid biosynthetic process"/>
    <property type="evidence" value="ECO:0007669"/>
    <property type="project" value="InterPro"/>
</dbReference>
<dbReference type="CDD" id="cd00554">
    <property type="entry name" value="MECDP_synthase"/>
    <property type="match status" value="1"/>
</dbReference>
<dbReference type="FunFam" id="3.30.1330.50:FF:000001">
    <property type="entry name" value="2-C-methyl-D-erythritol 2,4-cyclodiphosphate synthase"/>
    <property type="match status" value="1"/>
</dbReference>
<dbReference type="Gene3D" id="3.30.1330.50">
    <property type="entry name" value="2-C-methyl-D-erythritol 2,4-cyclodiphosphate synthase"/>
    <property type="match status" value="1"/>
</dbReference>
<dbReference type="HAMAP" id="MF_00107">
    <property type="entry name" value="IspF"/>
    <property type="match status" value="1"/>
</dbReference>
<dbReference type="InterPro" id="IPR003526">
    <property type="entry name" value="MECDP_synthase"/>
</dbReference>
<dbReference type="InterPro" id="IPR020555">
    <property type="entry name" value="MECDP_synthase_CS"/>
</dbReference>
<dbReference type="InterPro" id="IPR036571">
    <property type="entry name" value="MECDP_synthase_sf"/>
</dbReference>
<dbReference type="NCBIfam" id="TIGR00151">
    <property type="entry name" value="ispF"/>
    <property type="match status" value="1"/>
</dbReference>
<dbReference type="PANTHER" id="PTHR43181">
    <property type="entry name" value="2-C-METHYL-D-ERYTHRITOL 2,4-CYCLODIPHOSPHATE SYNTHASE, CHLOROPLASTIC"/>
    <property type="match status" value="1"/>
</dbReference>
<dbReference type="PANTHER" id="PTHR43181:SF1">
    <property type="entry name" value="2-C-METHYL-D-ERYTHRITOL 2,4-CYCLODIPHOSPHATE SYNTHASE, CHLOROPLASTIC"/>
    <property type="match status" value="1"/>
</dbReference>
<dbReference type="Pfam" id="PF02542">
    <property type="entry name" value="YgbB"/>
    <property type="match status" value="1"/>
</dbReference>
<dbReference type="SUPFAM" id="SSF69765">
    <property type="entry name" value="IpsF-like"/>
    <property type="match status" value="1"/>
</dbReference>
<dbReference type="PROSITE" id="PS01350">
    <property type="entry name" value="ISPF"/>
    <property type="match status" value="1"/>
</dbReference>
<evidence type="ECO:0000255" key="1">
    <source>
        <dbReference type="HAMAP-Rule" id="MF_00107"/>
    </source>
</evidence>
<reference key="1">
    <citation type="submission" date="2007-02" db="EMBL/GenBank/DDBJ databases">
        <title>Complete sequence of chromosome 1 of Rhodobacter sphaeroides ATCC 17029.</title>
        <authorList>
            <person name="Copeland A."/>
            <person name="Lucas S."/>
            <person name="Lapidus A."/>
            <person name="Barry K."/>
            <person name="Detter J.C."/>
            <person name="Glavina del Rio T."/>
            <person name="Hammon N."/>
            <person name="Israni S."/>
            <person name="Dalin E."/>
            <person name="Tice H."/>
            <person name="Pitluck S."/>
            <person name="Kiss H."/>
            <person name="Brettin T."/>
            <person name="Bruce D."/>
            <person name="Han C."/>
            <person name="Tapia R."/>
            <person name="Gilna P."/>
            <person name="Schmutz J."/>
            <person name="Larimer F."/>
            <person name="Land M."/>
            <person name="Hauser L."/>
            <person name="Kyrpides N."/>
            <person name="Mikhailova N."/>
            <person name="Richardson P."/>
            <person name="Mackenzie C."/>
            <person name="Choudhary M."/>
            <person name="Donohue T.J."/>
            <person name="Kaplan S."/>
        </authorList>
    </citation>
    <scope>NUCLEOTIDE SEQUENCE [LARGE SCALE GENOMIC DNA]</scope>
    <source>
        <strain>ATCC 17029 / ATH 2.4.9</strain>
    </source>
</reference>
<comment type="function">
    <text evidence="1">Involved in the biosynthesis of isopentenyl diphosphate (IPP) and dimethylallyl diphosphate (DMAPP), two major building blocks of isoprenoid compounds. Catalyzes the conversion of 4-diphosphocytidyl-2-C-methyl-D-erythritol 2-phosphate (CDP-ME2P) to 2-C-methyl-D-erythritol 2,4-cyclodiphosphate (ME-CPP) with a corresponding release of cytidine 5-monophosphate (CMP).</text>
</comment>
<comment type="catalytic activity">
    <reaction evidence="1">
        <text>4-CDP-2-C-methyl-D-erythritol 2-phosphate = 2-C-methyl-D-erythritol 2,4-cyclic diphosphate + CMP</text>
        <dbReference type="Rhea" id="RHEA:23864"/>
        <dbReference type="ChEBI" id="CHEBI:57919"/>
        <dbReference type="ChEBI" id="CHEBI:58483"/>
        <dbReference type="ChEBI" id="CHEBI:60377"/>
        <dbReference type="EC" id="4.6.1.12"/>
    </reaction>
</comment>
<comment type="cofactor">
    <cofactor evidence="1">
        <name>a divalent metal cation</name>
        <dbReference type="ChEBI" id="CHEBI:60240"/>
    </cofactor>
    <text evidence="1">Binds 1 divalent metal cation per subunit.</text>
</comment>
<comment type="pathway">
    <text evidence="1">Isoprenoid biosynthesis; isopentenyl diphosphate biosynthesis via DXP pathway; isopentenyl diphosphate from 1-deoxy-D-xylulose 5-phosphate: step 4/6.</text>
</comment>
<comment type="subunit">
    <text evidence="1">Homotrimer.</text>
</comment>
<comment type="similarity">
    <text evidence="1">Belongs to the IspF family.</text>
</comment>
<keyword id="KW-0414">Isoprene biosynthesis</keyword>
<keyword id="KW-0456">Lyase</keyword>
<keyword id="KW-0479">Metal-binding</keyword>
<feature type="chain" id="PRO_1000022869" description="2-C-methyl-D-erythritol 2,4-cyclodiphosphate synthase">
    <location>
        <begin position="1"/>
        <end position="159"/>
    </location>
</feature>
<feature type="binding site" evidence="1">
    <location>
        <begin position="10"/>
        <end position="12"/>
    </location>
    <ligand>
        <name>4-CDP-2-C-methyl-D-erythritol 2-phosphate</name>
        <dbReference type="ChEBI" id="CHEBI:57919"/>
    </ligand>
</feature>
<feature type="binding site" evidence="1">
    <location>
        <position position="10"/>
    </location>
    <ligand>
        <name>a divalent metal cation</name>
        <dbReference type="ChEBI" id="CHEBI:60240"/>
    </ligand>
</feature>
<feature type="binding site" evidence="1">
    <location>
        <position position="12"/>
    </location>
    <ligand>
        <name>a divalent metal cation</name>
        <dbReference type="ChEBI" id="CHEBI:60240"/>
    </ligand>
</feature>
<feature type="binding site" evidence="1">
    <location>
        <begin position="36"/>
        <end position="37"/>
    </location>
    <ligand>
        <name>4-CDP-2-C-methyl-D-erythritol 2-phosphate</name>
        <dbReference type="ChEBI" id="CHEBI:57919"/>
    </ligand>
</feature>
<feature type="binding site" evidence="1">
    <location>
        <position position="44"/>
    </location>
    <ligand>
        <name>a divalent metal cation</name>
        <dbReference type="ChEBI" id="CHEBI:60240"/>
    </ligand>
</feature>
<feature type="binding site" evidence="1">
    <location>
        <begin position="58"/>
        <end position="60"/>
    </location>
    <ligand>
        <name>4-CDP-2-C-methyl-D-erythritol 2-phosphate</name>
        <dbReference type="ChEBI" id="CHEBI:57919"/>
    </ligand>
</feature>
<feature type="binding site" evidence="1">
    <location>
        <begin position="134"/>
        <end position="137"/>
    </location>
    <ligand>
        <name>4-CDP-2-C-methyl-D-erythritol 2-phosphate</name>
        <dbReference type="ChEBI" id="CHEBI:57919"/>
    </ligand>
</feature>
<feature type="binding site" evidence="1">
    <location>
        <position position="141"/>
    </location>
    <ligand>
        <name>4-CDP-2-C-methyl-D-erythritol 2-phosphate</name>
        <dbReference type="ChEBI" id="CHEBI:57919"/>
    </ligand>
</feature>
<feature type="binding site" evidence="1">
    <location>
        <position position="144"/>
    </location>
    <ligand>
        <name>4-CDP-2-C-methyl-D-erythritol 2-phosphate</name>
        <dbReference type="ChEBI" id="CHEBI:57919"/>
    </ligand>
</feature>
<feature type="site" description="Transition state stabilizer" evidence="1">
    <location>
        <position position="36"/>
    </location>
</feature>
<feature type="site" description="Transition state stabilizer" evidence="1">
    <location>
        <position position="135"/>
    </location>
</feature>
<organism>
    <name type="scientific">Cereibacter sphaeroides (strain ATCC 17029 / ATH 2.4.9)</name>
    <name type="common">Rhodobacter sphaeroides</name>
    <dbReference type="NCBI Taxonomy" id="349101"/>
    <lineage>
        <taxon>Bacteria</taxon>
        <taxon>Pseudomonadati</taxon>
        <taxon>Pseudomonadota</taxon>
        <taxon>Alphaproteobacteria</taxon>
        <taxon>Rhodobacterales</taxon>
        <taxon>Paracoccaceae</taxon>
        <taxon>Cereibacter</taxon>
    </lineage>
</organism>
<sequence length="159" mass="16776">MDIRTGNGFDVHAFGPGDHVWLCGVRVPHHRGLIGHSDADVGMHALTDAIYGALAEGDIGVHFPPSDPQWKGAASRIFLEHAMGRIAARGYTLANCDVTLICERPKIGPVAPAMREALAEIMGIAADRISVKATTSEKLGFTGREEGIAAIATVALLQA</sequence>
<gene>
    <name evidence="1" type="primary">ispF</name>
    <name type="ordered locus">Rsph17029_1460</name>
</gene>
<proteinExistence type="inferred from homology"/>